<gene>
    <name evidence="1" type="primary">atpC</name>
    <name type="ordered locus">ACICU_00179</name>
</gene>
<sequence length="139" mass="14539">MATMQCDVVSVKESIYSGAVTMLIAKGAGGELGILPGHAPLVTLLQPGPIRVLLENGTEEIVYVSGGVLEVQPHVVTVLADTAIRADNLDEAAILEARKNAEQLLANQKSDLDSAAALAALAETAAQLETIRKIKNRAQ</sequence>
<comment type="function">
    <text evidence="1">Produces ATP from ADP in the presence of a proton gradient across the membrane.</text>
</comment>
<comment type="subunit">
    <text evidence="1">F-type ATPases have 2 components, CF(1) - the catalytic core - and CF(0) - the membrane proton channel. CF(1) has five subunits: alpha(3), beta(3), gamma(1), delta(1), epsilon(1). CF(0) has three main subunits: a, b and c.</text>
</comment>
<comment type="subcellular location">
    <subcellularLocation>
        <location evidence="1">Cell inner membrane</location>
        <topology evidence="1">Peripheral membrane protein</topology>
    </subcellularLocation>
</comment>
<comment type="similarity">
    <text evidence="1">Belongs to the ATPase epsilon chain family.</text>
</comment>
<dbReference type="EMBL" id="CP000863">
    <property type="protein sequence ID" value="ACC55491.1"/>
    <property type="molecule type" value="Genomic_DNA"/>
</dbReference>
<dbReference type="RefSeq" id="WP_000224542.1">
    <property type="nucleotide sequence ID" value="NZ_CP031380.1"/>
</dbReference>
<dbReference type="SMR" id="B2I103"/>
<dbReference type="KEGG" id="abc:ACICU_00179"/>
<dbReference type="HOGENOM" id="CLU_084338_2_0_6"/>
<dbReference type="Proteomes" id="UP000008839">
    <property type="component" value="Chromosome"/>
</dbReference>
<dbReference type="GO" id="GO:0005886">
    <property type="term" value="C:plasma membrane"/>
    <property type="evidence" value="ECO:0007669"/>
    <property type="project" value="UniProtKB-SubCell"/>
</dbReference>
<dbReference type="GO" id="GO:0045259">
    <property type="term" value="C:proton-transporting ATP synthase complex"/>
    <property type="evidence" value="ECO:0007669"/>
    <property type="project" value="UniProtKB-KW"/>
</dbReference>
<dbReference type="GO" id="GO:0005524">
    <property type="term" value="F:ATP binding"/>
    <property type="evidence" value="ECO:0007669"/>
    <property type="project" value="UniProtKB-UniRule"/>
</dbReference>
<dbReference type="GO" id="GO:0046933">
    <property type="term" value="F:proton-transporting ATP synthase activity, rotational mechanism"/>
    <property type="evidence" value="ECO:0007669"/>
    <property type="project" value="UniProtKB-UniRule"/>
</dbReference>
<dbReference type="CDD" id="cd12152">
    <property type="entry name" value="F1-ATPase_delta"/>
    <property type="match status" value="1"/>
</dbReference>
<dbReference type="FunFam" id="2.60.15.10:FF:000001">
    <property type="entry name" value="ATP synthase epsilon chain"/>
    <property type="match status" value="1"/>
</dbReference>
<dbReference type="Gene3D" id="1.20.5.440">
    <property type="entry name" value="ATP synthase delta/epsilon subunit, C-terminal domain"/>
    <property type="match status" value="1"/>
</dbReference>
<dbReference type="Gene3D" id="2.60.15.10">
    <property type="entry name" value="F0F1 ATP synthase delta/epsilon subunit, N-terminal"/>
    <property type="match status" value="1"/>
</dbReference>
<dbReference type="HAMAP" id="MF_00530">
    <property type="entry name" value="ATP_synth_epsil_bac"/>
    <property type="match status" value="1"/>
</dbReference>
<dbReference type="InterPro" id="IPR036794">
    <property type="entry name" value="ATP_F1_dsu/esu_C_sf"/>
</dbReference>
<dbReference type="InterPro" id="IPR001469">
    <property type="entry name" value="ATP_synth_F1_dsu/esu"/>
</dbReference>
<dbReference type="InterPro" id="IPR020546">
    <property type="entry name" value="ATP_synth_F1_dsu/esu_N"/>
</dbReference>
<dbReference type="InterPro" id="IPR036771">
    <property type="entry name" value="ATPsynth_dsu/esu_N"/>
</dbReference>
<dbReference type="NCBIfam" id="TIGR01216">
    <property type="entry name" value="ATP_synt_epsi"/>
    <property type="match status" value="1"/>
</dbReference>
<dbReference type="NCBIfam" id="NF001847">
    <property type="entry name" value="PRK00571.1-4"/>
    <property type="match status" value="1"/>
</dbReference>
<dbReference type="PANTHER" id="PTHR13822">
    <property type="entry name" value="ATP SYNTHASE DELTA/EPSILON CHAIN"/>
    <property type="match status" value="1"/>
</dbReference>
<dbReference type="PANTHER" id="PTHR13822:SF10">
    <property type="entry name" value="ATP SYNTHASE EPSILON CHAIN, CHLOROPLASTIC"/>
    <property type="match status" value="1"/>
</dbReference>
<dbReference type="Pfam" id="PF02823">
    <property type="entry name" value="ATP-synt_DE_N"/>
    <property type="match status" value="1"/>
</dbReference>
<dbReference type="SUPFAM" id="SSF46604">
    <property type="entry name" value="Epsilon subunit of F1F0-ATP synthase C-terminal domain"/>
    <property type="match status" value="1"/>
</dbReference>
<dbReference type="SUPFAM" id="SSF51344">
    <property type="entry name" value="Epsilon subunit of F1F0-ATP synthase N-terminal domain"/>
    <property type="match status" value="1"/>
</dbReference>
<protein>
    <recommendedName>
        <fullName evidence="1">ATP synthase epsilon chain</fullName>
    </recommendedName>
    <alternativeName>
        <fullName evidence="1">ATP synthase F1 sector epsilon subunit</fullName>
    </alternativeName>
    <alternativeName>
        <fullName evidence="1">F-ATPase epsilon subunit</fullName>
    </alternativeName>
</protein>
<reference key="1">
    <citation type="journal article" date="2008" name="Antimicrob. Agents Chemother.">
        <title>Whole-genome pyrosequencing of an epidemic multidrug-resistant Acinetobacter baumannii strain belonging to the European clone II group.</title>
        <authorList>
            <person name="Iacono M."/>
            <person name="Villa L."/>
            <person name="Fortini D."/>
            <person name="Bordoni R."/>
            <person name="Imperi F."/>
            <person name="Bonnal R.J."/>
            <person name="Sicheritz-Ponten T."/>
            <person name="De Bellis G."/>
            <person name="Visca P."/>
            <person name="Cassone A."/>
            <person name="Carattoli A."/>
        </authorList>
    </citation>
    <scope>NUCLEOTIDE SEQUENCE [LARGE SCALE GENOMIC DNA]</scope>
    <source>
        <strain>ACICU</strain>
    </source>
</reference>
<organism>
    <name type="scientific">Acinetobacter baumannii (strain ACICU)</name>
    <dbReference type="NCBI Taxonomy" id="405416"/>
    <lineage>
        <taxon>Bacteria</taxon>
        <taxon>Pseudomonadati</taxon>
        <taxon>Pseudomonadota</taxon>
        <taxon>Gammaproteobacteria</taxon>
        <taxon>Moraxellales</taxon>
        <taxon>Moraxellaceae</taxon>
        <taxon>Acinetobacter</taxon>
        <taxon>Acinetobacter calcoaceticus/baumannii complex</taxon>
    </lineage>
</organism>
<feature type="chain" id="PRO_1000127815" description="ATP synthase epsilon chain">
    <location>
        <begin position="1"/>
        <end position="139"/>
    </location>
</feature>
<accession>B2I103</accession>
<proteinExistence type="inferred from homology"/>
<name>ATPE_ACIBC</name>
<keyword id="KW-0066">ATP synthesis</keyword>
<keyword id="KW-0997">Cell inner membrane</keyword>
<keyword id="KW-1003">Cell membrane</keyword>
<keyword id="KW-0139">CF(1)</keyword>
<keyword id="KW-0375">Hydrogen ion transport</keyword>
<keyword id="KW-0406">Ion transport</keyword>
<keyword id="KW-0472">Membrane</keyword>
<keyword id="KW-0813">Transport</keyword>
<evidence type="ECO:0000255" key="1">
    <source>
        <dbReference type="HAMAP-Rule" id="MF_00530"/>
    </source>
</evidence>